<dbReference type="EC" id="4.2.1.19" evidence="1"/>
<dbReference type="EMBL" id="BA000040">
    <property type="protein sequence ID" value="BAC45915.1"/>
    <property type="molecule type" value="Genomic_DNA"/>
</dbReference>
<dbReference type="RefSeq" id="NP_767290.1">
    <property type="nucleotide sequence ID" value="NC_004463.1"/>
</dbReference>
<dbReference type="RefSeq" id="WP_011083477.1">
    <property type="nucleotide sequence ID" value="NC_004463.1"/>
</dbReference>
<dbReference type="SMR" id="Q89WM8"/>
<dbReference type="FunCoup" id="Q89WM8">
    <property type="interactions" value="443"/>
</dbReference>
<dbReference type="STRING" id="224911.AAV28_00085"/>
<dbReference type="EnsemblBacteria" id="BAC45915">
    <property type="protein sequence ID" value="BAC45915"/>
    <property type="gene ID" value="BAC45915"/>
</dbReference>
<dbReference type="GeneID" id="46487923"/>
<dbReference type="KEGG" id="bja:blr0650"/>
<dbReference type="PATRIC" id="fig|224911.44.peg.19"/>
<dbReference type="eggNOG" id="COG0131">
    <property type="taxonomic scope" value="Bacteria"/>
</dbReference>
<dbReference type="HOGENOM" id="CLU_044308_2_0_5"/>
<dbReference type="InParanoid" id="Q89WM8"/>
<dbReference type="OrthoDB" id="9813612at2"/>
<dbReference type="PhylomeDB" id="Q89WM8"/>
<dbReference type="UniPathway" id="UPA00031">
    <property type="reaction ID" value="UER00011"/>
</dbReference>
<dbReference type="Proteomes" id="UP000002526">
    <property type="component" value="Chromosome"/>
</dbReference>
<dbReference type="GO" id="GO:0005737">
    <property type="term" value="C:cytoplasm"/>
    <property type="evidence" value="ECO:0007669"/>
    <property type="project" value="UniProtKB-SubCell"/>
</dbReference>
<dbReference type="GO" id="GO:0004424">
    <property type="term" value="F:imidazoleglycerol-phosphate dehydratase activity"/>
    <property type="evidence" value="ECO:0000318"/>
    <property type="project" value="GO_Central"/>
</dbReference>
<dbReference type="GO" id="GO:0000105">
    <property type="term" value="P:L-histidine biosynthetic process"/>
    <property type="evidence" value="ECO:0000318"/>
    <property type="project" value="GO_Central"/>
</dbReference>
<dbReference type="CDD" id="cd07914">
    <property type="entry name" value="IGPD"/>
    <property type="match status" value="1"/>
</dbReference>
<dbReference type="FunFam" id="3.30.230.40:FF:000001">
    <property type="entry name" value="Imidazoleglycerol-phosphate dehydratase HisB"/>
    <property type="match status" value="1"/>
</dbReference>
<dbReference type="FunFam" id="3.30.230.40:FF:000003">
    <property type="entry name" value="Imidazoleglycerol-phosphate dehydratase HisB"/>
    <property type="match status" value="1"/>
</dbReference>
<dbReference type="Gene3D" id="3.30.230.40">
    <property type="entry name" value="Imidazole glycerol phosphate dehydratase, domain 1"/>
    <property type="match status" value="2"/>
</dbReference>
<dbReference type="HAMAP" id="MF_00076">
    <property type="entry name" value="HisB"/>
    <property type="match status" value="1"/>
</dbReference>
<dbReference type="InterPro" id="IPR038494">
    <property type="entry name" value="IGPD_sf"/>
</dbReference>
<dbReference type="InterPro" id="IPR000807">
    <property type="entry name" value="ImidazoleglycerolP_deHydtase"/>
</dbReference>
<dbReference type="InterPro" id="IPR020565">
    <property type="entry name" value="ImidazoleglycerP_deHydtase_CS"/>
</dbReference>
<dbReference type="InterPro" id="IPR020568">
    <property type="entry name" value="Ribosomal_Su5_D2-typ_SF"/>
</dbReference>
<dbReference type="NCBIfam" id="NF002109">
    <property type="entry name" value="PRK00951.1-5"/>
    <property type="match status" value="1"/>
</dbReference>
<dbReference type="NCBIfam" id="NF002111">
    <property type="entry name" value="PRK00951.2-1"/>
    <property type="match status" value="1"/>
</dbReference>
<dbReference type="NCBIfam" id="NF002114">
    <property type="entry name" value="PRK00951.2-4"/>
    <property type="match status" value="1"/>
</dbReference>
<dbReference type="PANTHER" id="PTHR23133:SF2">
    <property type="entry name" value="IMIDAZOLEGLYCEROL-PHOSPHATE DEHYDRATASE"/>
    <property type="match status" value="1"/>
</dbReference>
<dbReference type="PANTHER" id="PTHR23133">
    <property type="entry name" value="IMIDAZOLEGLYCEROL-PHOSPHATE DEHYDRATASE HIS7"/>
    <property type="match status" value="1"/>
</dbReference>
<dbReference type="Pfam" id="PF00475">
    <property type="entry name" value="IGPD"/>
    <property type="match status" value="1"/>
</dbReference>
<dbReference type="SUPFAM" id="SSF54211">
    <property type="entry name" value="Ribosomal protein S5 domain 2-like"/>
    <property type="match status" value="2"/>
</dbReference>
<dbReference type="PROSITE" id="PS00954">
    <property type="entry name" value="IGP_DEHYDRATASE_1"/>
    <property type="match status" value="1"/>
</dbReference>
<dbReference type="PROSITE" id="PS00955">
    <property type="entry name" value="IGP_DEHYDRATASE_2"/>
    <property type="match status" value="1"/>
</dbReference>
<feature type="chain" id="PRO_0000158115" description="Imidazoleglycerol-phosphate dehydratase">
    <location>
        <begin position="1"/>
        <end position="197"/>
    </location>
</feature>
<proteinExistence type="inferred from homology"/>
<protein>
    <recommendedName>
        <fullName evidence="1">Imidazoleglycerol-phosphate dehydratase</fullName>
        <shortName evidence="1">IGPD</shortName>
        <ecNumber evidence="1">4.2.1.19</ecNumber>
    </recommendedName>
</protein>
<keyword id="KW-0028">Amino-acid biosynthesis</keyword>
<keyword id="KW-0963">Cytoplasm</keyword>
<keyword id="KW-0368">Histidine biosynthesis</keyword>
<keyword id="KW-0456">Lyase</keyword>
<keyword id="KW-1185">Reference proteome</keyword>
<organism>
    <name type="scientific">Bradyrhizobium diazoefficiens (strain JCM 10833 / BCRC 13528 / IAM 13628 / NBRC 14792 / USDA 110)</name>
    <dbReference type="NCBI Taxonomy" id="224911"/>
    <lineage>
        <taxon>Bacteria</taxon>
        <taxon>Pseudomonadati</taxon>
        <taxon>Pseudomonadota</taxon>
        <taxon>Alphaproteobacteria</taxon>
        <taxon>Hyphomicrobiales</taxon>
        <taxon>Nitrobacteraceae</taxon>
        <taxon>Bradyrhizobium</taxon>
    </lineage>
</organism>
<comment type="catalytic activity">
    <reaction evidence="1">
        <text>D-erythro-1-(imidazol-4-yl)glycerol 3-phosphate = 3-(imidazol-4-yl)-2-oxopropyl phosphate + H2O</text>
        <dbReference type="Rhea" id="RHEA:11040"/>
        <dbReference type="ChEBI" id="CHEBI:15377"/>
        <dbReference type="ChEBI" id="CHEBI:57766"/>
        <dbReference type="ChEBI" id="CHEBI:58278"/>
        <dbReference type="EC" id="4.2.1.19"/>
    </reaction>
</comment>
<comment type="pathway">
    <text evidence="1">Amino-acid biosynthesis; L-histidine biosynthesis; L-histidine from 5-phospho-alpha-D-ribose 1-diphosphate: step 6/9.</text>
</comment>
<comment type="subcellular location">
    <subcellularLocation>
        <location evidence="1">Cytoplasm</location>
    </subcellularLocation>
</comment>
<comment type="similarity">
    <text evidence="1">Belongs to the imidazoleglycerol-phosphate dehydratase family.</text>
</comment>
<evidence type="ECO:0000255" key="1">
    <source>
        <dbReference type="HAMAP-Rule" id="MF_00076"/>
    </source>
</evidence>
<gene>
    <name evidence="1" type="primary">hisB</name>
    <name type="ordered locus">blr0650</name>
</gene>
<accession>Q89WM8</accession>
<reference key="1">
    <citation type="journal article" date="2002" name="DNA Res.">
        <title>Complete genomic sequence of nitrogen-fixing symbiotic bacterium Bradyrhizobium japonicum USDA110.</title>
        <authorList>
            <person name="Kaneko T."/>
            <person name="Nakamura Y."/>
            <person name="Sato S."/>
            <person name="Minamisawa K."/>
            <person name="Uchiumi T."/>
            <person name="Sasamoto S."/>
            <person name="Watanabe A."/>
            <person name="Idesawa K."/>
            <person name="Iriguchi M."/>
            <person name="Kawashima K."/>
            <person name="Kohara M."/>
            <person name="Matsumoto M."/>
            <person name="Shimpo S."/>
            <person name="Tsuruoka H."/>
            <person name="Wada T."/>
            <person name="Yamada M."/>
            <person name="Tabata S."/>
        </authorList>
    </citation>
    <scope>NUCLEOTIDE SEQUENCE [LARGE SCALE GENOMIC DNA]</scope>
    <source>
        <strain>JCM 10833 / BCRC 13528 / IAM 13628 / NBRC 14792 / USDA 110</strain>
    </source>
</reference>
<name>HIS7_BRADU</name>
<sequence>MRTATIKRKTKETDIEVTVNLDGTGVSNIATGIGFFDHMLDLLARHSRIDLTVKAVGDLHIDHHHTTEDTGIALGQAVKQALGTMAGITRYAGVHMPMDETLSRVVIDISGRPVLVFKVDFPRDKIGEFDTELVREWFQAFAMNASVTLHVETLYGDNSHHIAESCFKGLARALRAAVAIDPKAAGEIPSTKGSLGG</sequence>